<comment type="function">
    <text>Lactoglobulin is the primary component of whey, it binds retinol and is probably involved in the transport of that molecule.</text>
</comment>
<comment type="subunit">
    <text>Under physiological conditions beta-lactoglobulin exists as an equilibrium mixture of monomeric and dimeric forms.</text>
</comment>
<comment type="subcellular location">
    <subcellularLocation>
        <location>Secreted</location>
    </subcellularLocation>
</comment>
<comment type="similarity">
    <text evidence="2">Belongs to the calycin superfamily. Lipocalin family.</text>
</comment>
<protein>
    <recommendedName>
        <fullName>Beta-lactoglobulin-1A/1C</fullName>
    </recommendedName>
    <alternativeName>
        <fullName>Beta-lactoglobulin IA/IC</fullName>
        <shortName>Beta-LG</shortName>
    </alternativeName>
</protein>
<feature type="signal peptide" evidence="1">
    <location>
        <begin position="1"/>
        <end position="18"/>
    </location>
</feature>
<feature type="chain" id="PRO_0000017909" description="Beta-lactoglobulin-1A/1C">
    <location>
        <begin position="19"/>
        <end position="178"/>
    </location>
</feature>
<feature type="disulfide bond">
    <location>
        <begin position="84"/>
        <end position="176"/>
    </location>
</feature>
<feature type="disulfide bond">
    <location>
        <begin position="124"/>
        <end position="137"/>
    </location>
</feature>
<feature type="sequence variant" description="In variant C.">
    <original>E</original>
    <variation>D</variation>
    <location>
        <position position="27"/>
    </location>
</feature>
<feature type="sequence variant" description="In variant C.">
    <original>Q</original>
    <variation>H</variation>
    <location>
        <position position="86"/>
    </location>
</feature>
<feature type="helix" evidence="3">
    <location>
        <begin position="30"/>
        <end position="33"/>
    </location>
</feature>
<feature type="strand" evidence="3">
    <location>
        <begin position="34"/>
        <end position="36"/>
    </location>
</feature>
<feature type="strand" evidence="3">
    <location>
        <begin position="38"/>
        <end position="47"/>
    </location>
</feature>
<feature type="helix" evidence="3">
    <location>
        <begin position="56"/>
        <end position="58"/>
    </location>
</feature>
<feature type="strand" evidence="3">
    <location>
        <begin position="59"/>
        <end position="66"/>
    </location>
</feature>
<feature type="strand" evidence="3">
    <location>
        <begin position="72"/>
        <end position="80"/>
    </location>
</feature>
<feature type="strand" evidence="3">
    <location>
        <begin position="83"/>
        <end position="93"/>
    </location>
</feature>
<feature type="strand" evidence="3">
    <location>
        <begin position="100"/>
        <end position="104"/>
    </location>
</feature>
<feature type="strand" evidence="3">
    <location>
        <begin position="107"/>
        <end position="115"/>
    </location>
</feature>
<feature type="turn" evidence="3">
    <location>
        <begin position="116"/>
        <end position="119"/>
    </location>
</feature>
<feature type="strand" evidence="3">
    <location>
        <begin position="120"/>
        <end position="126"/>
    </location>
</feature>
<feature type="helix" evidence="3">
    <location>
        <begin position="131"/>
        <end position="134"/>
    </location>
</feature>
<feature type="strand" evidence="3">
    <location>
        <begin position="136"/>
        <end position="144"/>
    </location>
</feature>
<feature type="helix" evidence="3">
    <location>
        <begin position="148"/>
        <end position="158"/>
    </location>
</feature>
<feature type="strand" evidence="3">
    <location>
        <begin position="161"/>
        <end position="163"/>
    </location>
</feature>
<feature type="strand" evidence="3">
    <location>
        <begin position="165"/>
        <end position="167"/>
    </location>
</feature>
<organism>
    <name type="scientific">Sus scrofa</name>
    <name type="common">Pig</name>
    <dbReference type="NCBI Taxonomy" id="9823"/>
    <lineage>
        <taxon>Eukaryota</taxon>
        <taxon>Metazoa</taxon>
        <taxon>Chordata</taxon>
        <taxon>Craniata</taxon>
        <taxon>Vertebrata</taxon>
        <taxon>Euteleostomi</taxon>
        <taxon>Mammalia</taxon>
        <taxon>Eutheria</taxon>
        <taxon>Laurasiatheria</taxon>
        <taxon>Artiodactyla</taxon>
        <taxon>Suina</taxon>
        <taxon>Suidae</taxon>
        <taxon>Sus</taxon>
    </lineage>
</organism>
<accession>P04119</accession>
<accession>Q53Z18</accession>
<reference key="1">
    <citation type="journal article" date="1992" name="Anim. Genet.">
        <title>Sequence of porcine beta-lactoglobulin cDNA.</title>
        <authorList>
            <person name="Alexander L.J."/>
            <person name="Beattie C.W."/>
        </authorList>
    </citation>
    <scope>NUCLEOTIDE SEQUENCE [MRNA]</scope>
    <source>
        <tissue>Mammary gland</tissue>
    </source>
</reference>
<reference key="2">
    <citation type="submission" date="2003-08" db="EMBL/GenBank/DDBJ databases">
        <title>Porcine beta-lactoglobulin mRNA.</title>
        <authorList>
            <person name="Larsen K."/>
            <person name="Hedegaard J."/>
            <person name="Bendixen C."/>
        </authorList>
    </citation>
    <scope>NUCLEOTIDE SEQUENCE [MRNA]</scope>
    <source>
        <tissue>Cerebellum</tissue>
    </source>
</reference>
<reference key="3">
    <citation type="journal article" date="1986" name="Biol. Chem. Hoppe-Seyler">
        <title>Pig beta-lactoglobulin I (Sus scrofa domestica, Artiodactyla). The primary structure of the major component.</title>
        <authorList>
            <person name="Conti A."/>
            <person name="Godovac-Zimmermann J."/>
            <person name="Pirchner F."/>
            <person name="Liberatori J."/>
            <person name="Braunitzer G."/>
        </authorList>
    </citation>
    <scope>PROTEIN SEQUENCE OF 19-178</scope>
</reference>
<reference key="4">
    <citation type="journal article" date="1981" name="Mol. Cell. Biochem.">
        <title>Porcine beta-lactoglobulin A and C. Occurrence, isolation and chemical properties.</title>
        <authorList>
            <person name="Bell K."/>
            <person name="McKenzie H.A."/>
            <person name="Shaw D.C."/>
        </authorList>
    </citation>
    <scope>PARTIAL PROTEIN SEQUENCE</scope>
</reference>
<reference key="5">
    <citation type="journal article" date="1991" name="Biochim. Biophys. Acta">
        <title>The complete amino acid sequence of feline beta-lactoglobulin II and a partial revision of the equine beta-lactoglobulin II sequence.</title>
        <authorList>
            <person name="Halliday J.A."/>
            <person name="Bell K."/>
            <person name="Shaw D.C."/>
        </authorList>
    </citation>
    <scope>SEQUENCE REVISION TO 87; 128; 131; 137 AND 139</scope>
</reference>
<reference key="6">
    <citation type="journal article" date="2002" name="Acta Crystallogr. D">
        <title>A novel pH-dependent dimerization motif in beta-lactoglobulin from pig (Sus scrofa).</title>
        <authorList>
            <person name="Hoedemaeker F.J."/>
            <person name="Visschers R.W."/>
            <person name="Alting A.C."/>
            <person name="de Kruif K.G."/>
            <person name="Kuil M.E."/>
            <person name="Abrahams J.P."/>
        </authorList>
    </citation>
    <scope>X-RAY CRYSTALLOGRAPHY (2.39 ANGSTROMS)</scope>
</reference>
<dbReference type="EMBL" id="X54976">
    <property type="protein sequence ID" value="CAA38720.1"/>
    <property type="molecule type" value="mRNA"/>
</dbReference>
<dbReference type="EMBL" id="AY372187">
    <property type="protein sequence ID" value="AAQ74978.1"/>
    <property type="molecule type" value="mRNA"/>
</dbReference>
<dbReference type="PIR" id="A45542">
    <property type="entry name" value="A45542"/>
</dbReference>
<dbReference type="RefSeq" id="NP_998919.1">
    <property type="nucleotide sequence ID" value="NM_213754.2"/>
</dbReference>
<dbReference type="RefSeq" id="XP_013849407.1">
    <property type="nucleotide sequence ID" value="XM_013993953.1"/>
</dbReference>
<dbReference type="PDB" id="1EXS">
    <property type="method" value="X-ray"/>
    <property type="resolution" value="2.39 A"/>
    <property type="chains" value="A=19-178"/>
</dbReference>
<dbReference type="PDBsum" id="1EXS"/>
<dbReference type="SMR" id="P04119"/>
<dbReference type="FunCoup" id="P04119">
    <property type="interactions" value="46"/>
</dbReference>
<dbReference type="STRING" id="9823.ENSSSCP00000044067"/>
<dbReference type="PaxDb" id="9823-ENSSSCP00000006164"/>
<dbReference type="PeptideAtlas" id="P04119"/>
<dbReference type="Ensembl" id="ENSSSCT00000055335.3">
    <property type="protein sequence ID" value="ENSSSCP00000044067.3"/>
    <property type="gene ID" value="ENSSSCG00000040042.3"/>
</dbReference>
<dbReference type="Ensembl" id="ENSSSCT00025055905.1">
    <property type="protein sequence ID" value="ENSSSCP00025023695.1"/>
    <property type="gene ID" value="ENSSSCG00025041122.1"/>
</dbReference>
<dbReference type="Ensembl" id="ENSSSCT00045008980.1">
    <property type="protein sequence ID" value="ENSSSCP00045006104.1"/>
    <property type="gene ID" value="ENSSSCG00045005411.1"/>
</dbReference>
<dbReference type="Ensembl" id="ENSSSCT00065017180.1">
    <property type="protein sequence ID" value="ENSSSCP00065007039.1"/>
    <property type="gene ID" value="ENSSSCG00065012892.1"/>
</dbReference>
<dbReference type="Ensembl" id="ENSSSCT00105027456">
    <property type="protein sequence ID" value="ENSSSCP00105019365"/>
    <property type="gene ID" value="ENSSSCG00105014126"/>
</dbReference>
<dbReference type="Ensembl" id="ENSSSCT00110076869">
    <property type="protein sequence ID" value="ENSSSCP00110054309"/>
    <property type="gene ID" value="ENSSSCG00110040222"/>
</dbReference>
<dbReference type="Ensembl" id="ENSSSCT00115011874">
    <property type="protein sequence ID" value="ENSSSCP00115011207"/>
    <property type="gene ID" value="ENSSSCG00115006828"/>
</dbReference>
<dbReference type="GeneID" id="396596"/>
<dbReference type="KEGG" id="ssc:396596"/>
<dbReference type="CTD" id="5047"/>
<dbReference type="VGNC" id="VGNC:91149">
    <property type="gene designation" value="PAEP"/>
</dbReference>
<dbReference type="eggNOG" id="ENOG502T0EI">
    <property type="taxonomic scope" value="Eukaryota"/>
</dbReference>
<dbReference type="GeneTree" id="ENSGT01050000244868"/>
<dbReference type="HOGENOM" id="CLU_094061_5_0_1"/>
<dbReference type="InParanoid" id="P04119"/>
<dbReference type="OMA" id="GRCAEQK"/>
<dbReference type="OrthoDB" id="9835883at2759"/>
<dbReference type="TreeFam" id="TF342475"/>
<dbReference type="EvolutionaryTrace" id="P04119"/>
<dbReference type="Proteomes" id="UP000008227">
    <property type="component" value="Unassembled WGS sequence"/>
</dbReference>
<dbReference type="Proteomes" id="UP000314985">
    <property type="component" value="Unplaced"/>
</dbReference>
<dbReference type="Proteomes" id="UP000694570">
    <property type="component" value="Unplaced"/>
</dbReference>
<dbReference type="Proteomes" id="UP000694571">
    <property type="component" value="Unplaced"/>
</dbReference>
<dbReference type="Proteomes" id="UP000694720">
    <property type="component" value="Unplaced"/>
</dbReference>
<dbReference type="Proteomes" id="UP000694722">
    <property type="component" value="Unplaced"/>
</dbReference>
<dbReference type="Proteomes" id="UP000694723">
    <property type="component" value="Unplaced"/>
</dbReference>
<dbReference type="Proteomes" id="UP000694724">
    <property type="component" value="Unplaced"/>
</dbReference>
<dbReference type="Proteomes" id="UP000694725">
    <property type="component" value="Unplaced"/>
</dbReference>
<dbReference type="Proteomes" id="UP000694726">
    <property type="component" value="Unplaced"/>
</dbReference>
<dbReference type="Proteomes" id="UP000694727">
    <property type="component" value="Unplaced"/>
</dbReference>
<dbReference type="Proteomes" id="UP000694728">
    <property type="component" value="Unplaced"/>
</dbReference>
<dbReference type="GO" id="GO:0005576">
    <property type="term" value="C:extracellular region"/>
    <property type="evidence" value="ECO:0007669"/>
    <property type="project" value="UniProtKB-SubCell"/>
</dbReference>
<dbReference type="GO" id="GO:0019841">
    <property type="term" value="F:retinol binding"/>
    <property type="evidence" value="ECO:0007669"/>
    <property type="project" value="UniProtKB-KW"/>
</dbReference>
<dbReference type="CDD" id="cd19416">
    <property type="entry name" value="lipocalin_beta-LG-like"/>
    <property type="match status" value="1"/>
</dbReference>
<dbReference type="Gene3D" id="2.40.128.20">
    <property type="match status" value="1"/>
</dbReference>
<dbReference type="InterPro" id="IPR002447">
    <property type="entry name" value="Blactoglobulin"/>
</dbReference>
<dbReference type="InterPro" id="IPR012674">
    <property type="entry name" value="Calycin"/>
</dbReference>
<dbReference type="InterPro" id="IPR002345">
    <property type="entry name" value="Lipocalin"/>
</dbReference>
<dbReference type="InterPro" id="IPR022272">
    <property type="entry name" value="Lipocalin_CS"/>
</dbReference>
<dbReference type="InterPro" id="IPR000566">
    <property type="entry name" value="Lipocln_cytosolic_FA-bd_dom"/>
</dbReference>
<dbReference type="PANTHER" id="PTHR11430:SF117">
    <property type="entry name" value="GLYCODELIN"/>
    <property type="match status" value="1"/>
</dbReference>
<dbReference type="PANTHER" id="PTHR11430">
    <property type="entry name" value="LIPOCALIN"/>
    <property type="match status" value="1"/>
</dbReference>
<dbReference type="Pfam" id="PF00061">
    <property type="entry name" value="Lipocalin"/>
    <property type="match status" value="1"/>
</dbReference>
<dbReference type="PRINTS" id="PR01172">
    <property type="entry name" value="BLCTOGLOBULN"/>
</dbReference>
<dbReference type="PRINTS" id="PR00179">
    <property type="entry name" value="LIPOCALIN"/>
</dbReference>
<dbReference type="SUPFAM" id="SSF50814">
    <property type="entry name" value="Lipocalins"/>
    <property type="match status" value="1"/>
</dbReference>
<dbReference type="PROSITE" id="PS00213">
    <property type="entry name" value="LIPOCALIN"/>
    <property type="match status" value="1"/>
</dbReference>
<name>LACB_PIG</name>
<evidence type="ECO:0000269" key="1">
    <source>
    </source>
</evidence>
<evidence type="ECO:0000305" key="2"/>
<evidence type="ECO:0007829" key="3">
    <source>
        <dbReference type="PDB" id="1EXS"/>
    </source>
</evidence>
<keyword id="KW-0002">3D-structure</keyword>
<keyword id="KW-0903">Direct protein sequencing</keyword>
<keyword id="KW-1015">Disulfide bond</keyword>
<keyword id="KW-0494">Milk protein</keyword>
<keyword id="KW-1185">Reference proteome</keyword>
<keyword id="KW-0683">Retinol-binding</keyword>
<keyword id="KW-0964">Secreted</keyword>
<keyword id="KW-0732">Signal</keyword>
<keyword id="KW-0813">Transport</keyword>
<proteinExistence type="evidence at protein level"/>
<sequence length="178" mass="19734">MRCLLLTLGLALLCGVQAVEVTPIMTELDTQKVAGTWHTVAMAVSDVSLLDAKSSPLKAYVEGLKPTPEGDLEILLQKRENDKCAQEVLLAKKTDIPAVFKINALDENQLFLLDTDYDSHLLLCMENSASPEHSLVCQSLARTLEVDDQIREKFEDALKTLSVPMRILPAQLEEQCRV</sequence>